<evidence type="ECO:0000250" key="1">
    <source>
        <dbReference type="UniProtKB" id="Q17339"/>
    </source>
</evidence>
<evidence type="ECO:0000255" key="2">
    <source>
        <dbReference type="PROSITE-ProRule" id="PRU00117"/>
    </source>
</evidence>
<evidence type="ECO:0000256" key="3">
    <source>
        <dbReference type="SAM" id="MobiDB-lite"/>
    </source>
</evidence>
<evidence type="ECO:0000269" key="4">
    <source>
    </source>
</evidence>
<evidence type="ECO:0000269" key="5">
    <source>
    </source>
</evidence>
<evidence type="ECO:0000269" key="6">
    <source>
    </source>
</evidence>
<evidence type="ECO:0000303" key="7">
    <source>
    </source>
</evidence>
<evidence type="ECO:0000303" key="8">
    <source>
    </source>
</evidence>
<evidence type="ECO:0000303" key="9">
    <source>
    </source>
</evidence>
<evidence type="ECO:0000305" key="10"/>
<evidence type="ECO:0000305" key="11">
    <source>
    </source>
</evidence>
<evidence type="ECO:0000312" key="12">
    <source>
        <dbReference type="EMBL" id="ABU96120.1"/>
    </source>
</evidence>
<evidence type="ECO:0000312" key="13">
    <source>
        <dbReference type="Proteomes" id="UP000001940"/>
    </source>
</evidence>
<evidence type="ECO:0000312" key="14">
    <source>
        <dbReference type="WormBase" id="T21G5.5a"/>
    </source>
</evidence>
<evidence type="ECO:0000312" key="15">
    <source>
        <dbReference type="WormBase" id="T21G5.5b"/>
    </source>
</evidence>
<evidence type="ECO:0000312" key="16">
    <source>
        <dbReference type="WormBase" id="T21G5.5c"/>
    </source>
</evidence>
<name>ASD2_CAEEL</name>
<keyword id="KW-0025">Alternative splicing</keyword>
<keyword id="KW-0507">mRNA processing</keyword>
<keyword id="KW-0508">mRNA splicing</keyword>
<keyword id="KW-0539">Nucleus</keyword>
<keyword id="KW-1185">Reference proteome</keyword>
<keyword id="KW-0694">RNA-binding</keyword>
<reference evidence="12" key="1">
    <citation type="journal article" date="2008" name="Genes Dev.">
        <title>STAR family RNA-binding protein ASD-2 regulates developmental switching of mutually exclusive alternative splicing in vivo.</title>
        <authorList>
            <person name="Ohno G."/>
            <person name="Hagiwara M."/>
            <person name="Kuroyanagi H."/>
        </authorList>
    </citation>
    <scope>NUCLEOTIDE SEQUENCE [MRNA] (ISOFORMS B AND C)</scope>
    <scope>FUNCTION</scope>
    <scope>TISSUE SPECIFICITY</scope>
    <scope>DEVELOPMENTAL STAGE</scope>
    <scope>DISRUPTION PHENOTYPE</scope>
    <scope>MUTAGENESIS OF GLU-244</scope>
    <source>
        <strain evidence="12">Bristol N2</strain>
    </source>
</reference>
<reference evidence="13" key="2">
    <citation type="journal article" date="1998" name="Science">
        <title>Genome sequence of the nematode C. elegans: a platform for investigating biology.</title>
        <authorList>
            <consortium name="The C. elegans sequencing consortium"/>
        </authorList>
    </citation>
    <scope>NUCLEOTIDE SEQUENCE [LARGE SCALE GENOMIC DNA]</scope>
    <source>
        <strain evidence="13">Bristol N2</strain>
    </source>
</reference>
<reference evidence="10" key="3">
    <citation type="journal article" date="2010" name="BMC Mol. Biol.">
        <title>High-affinity consensus binding of target RNAs by the STAR/GSG proteins GLD-1, STAR-2 and Quaking.</title>
        <authorList>
            <person name="Carmel A.B."/>
            <person name="Wu J."/>
            <person name="Lehmann-Blount K.A."/>
            <person name="Williamson J.R."/>
        </authorList>
    </citation>
    <scope>FUNCTION</scope>
    <scope>DOMAIN</scope>
</reference>
<reference evidence="10" key="4">
    <citation type="journal article" date="2012" name="PLoS Genet.">
        <title>Muscle-specific splicing factors ASD-2 and SUP-12 cooperatively switch alternative pre-mRNA processing patterns of the ADF/cofilin gene in Caenorhabditis elegans.</title>
        <authorList>
            <person name="Ohno G."/>
            <person name="Ono K."/>
            <person name="Togo M."/>
            <person name="Watanabe Y."/>
            <person name="Ono S."/>
            <person name="Hagiwara M."/>
            <person name="Kuroyanagi H."/>
        </authorList>
    </citation>
    <scope>FUNCTION</scope>
    <scope>INTERACTION WITH SUP-12</scope>
    <scope>SUBCELLULAR LOCATION</scope>
    <scope>TISSUE SPECIFICITY</scope>
    <scope>DISRUPTION PHENOTYPE</scope>
</reference>
<dbReference type="EMBL" id="EF630625">
    <property type="protein sequence ID" value="ABU96119.1"/>
    <property type="molecule type" value="mRNA"/>
</dbReference>
<dbReference type="EMBL" id="EF630626">
    <property type="protein sequence ID" value="ABU96120.1"/>
    <property type="molecule type" value="mRNA"/>
</dbReference>
<dbReference type="EMBL" id="BX284601">
    <property type="protein sequence ID" value="CCD67593.1"/>
    <property type="molecule type" value="Genomic_DNA"/>
</dbReference>
<dbReference type="EMBL" id="BX284601">
    <property type="protein sequence ID" value="CCD67594.1"/>
    <property type="molecule type" value="Genomic_DNA"/>
</dbReference>
<dbReference type="EMBL" id="BX284601">
    <property type="protein sequence ID" value="CCD67595.1"/>
    <property type="molecule type" value="Genomic_DNA"/>
</dbReference>
<dbReference type="PIR" id="T15136">
    <property type="entry name" value="T15136"/>
</dbReference>
<dbReference type="RefSeq" id="NP_001021625.1">
    <molecule id="G5EFF1-2"/>
    <property type="nucleotide sequence ID" value="NM_001026454.5"/>
</dbReference>
<dbReference type="RefSeq" id="NP_001021626.1">
    <molecule id="G5EFF1-3"/>
    <property type="nucleotide sequence ID" value="NM_001026455.6"/>
</dbReference>
<dbReference type="RefSeq" id="NP_001021627.1">
    <molecule id="G5EFF1-1"/>
    <property type="nucleotide sequence ID" value="NM_001026456.4"/>
</dbReference>
<dbReference type="SMR" id="G5EFF1"/>
<dbReference type="DIP" id="DIP-26760N"/>
<dbReference type="FunCoup" id="G5EFF1">
    <property type="interactions" value="1959"/>
</dbReference>
<dbReference type="IntAct" id="G5EFF1">
    <property type="interactions" value="19"/>
</dbReference>
<dbReference type="STRING" id="6239.T21G5.5d.1"/>
<dbReference type="PaxDb" id="6239-T21G5.5d"/>
<dbReference type="EnsemblMetazoa" id="T21G5.5a.1">
    <molecule id="G5EFF1-2"/>
    <property type="protein sequence ID" value="T21G5.5a.1"/>
    <property type="gene ID" value="WBGene00006423"/>
</dbReference>
<dbReference type="EnsemblMetazoa" id="T21G5.5b.1">
    <molecule id="G5EFF1-3"/>
    <property type="protein sequence ID" value="T21G5.5b.1"/>
    <property type="gene ID" value="WBGene00006423"/>
</dbReference>
<dbReference type="EnsemblMetazoa" id="T21G5.5b.2">
    <molecule id="G5EFF1-3"/>
    <property type="protein sequence ID" value="T21G5.5b.2"/>
    <property type="gene ID" value="WBGene00006423"/>
</dbReference>
<dbReference type="EnsemblMetazoa" id="T21G5.5c.1">
    <molecule id="G5EFF1-1"/>
    <property type="protein sequence ID" value="T21G5.5c.1"/>
    <property type="gene ID" value="WBGene00006423"/>
</dbReference>
<dbReference type="GeneID" id="188703"/>
<dbReference type="KEGG" id="cel:CELE_T21G5.5"/>
<dbReference type="UCSC" id="T21G5.5c">
    <property type="organism name" value="c. elegans"/>
</dbReference>
<dbReference type="AGR" id="WB:WBGene00006423"/>
<dbReference type="CTD" id="188703"/>
<dbReference type="WormBase" id="T21G5.5a">
    <molecule id="G5EFF1-2"/>
    <property type="protein sequence ID" value="CE32731"/>
    <property type="gene ID" value="WBGene00006423"/>
    <property type="gene designation" value="asd-2"/>
</dbReference>
<dbReference type="WormBase" id="T21G5.5b">
    <molecule id="G5EFF1-3"/>
    <property type="protein sequence ID" value="CE13896"/>
    <property type="gene ID" value="WBGene00006423"/>
    <property type="gene designation" value="asd-2"/>
</dbReference>
<dbReference type="WormBase" id="T21G5.5c">
    <molecule id="G5EFF1-1"/>
    <property type="protein sequence ID" value="CE37411"/>
    <property type="gene ID" value="WBGene00006423"/>
    <property type="gene designation" value="asd-2"/>
</dbReference>
<dbReference type="eggNOG" id="KOG1588">
    <property type="taxonomic scope" value="Eukaryota"/>
</dbReference>
<dbReference type="GeneTree" id="ENSGT00940000167937"/>
<dbReference type="InParanoid" id="G5EFF1"/>
<dbReference type="OMA" id="ISHAGAM"/>
<dbReference type="OrthoDB" id="6777263at2759"/>
<dbReference type="PhylomeDB" id="G5EFF1"/>
<dbReference type="PRO" id="PR:G5EFF1"/>
<dbReference type="Proteomes" id="UP000001940">
    <property type="component" value="Chromosome I"/>
</dbReference>
<dbReference type="Bgee" id="WBGene00006423">
    <property type="expression patterns" value="Expressed in pharyngeal muscle cell (C elegans) and 3 other cell types or tissues"/>
</dbReference>
<dbReference type="ExpressionAtlas" id="G5EFF1">
    <property type="expression patterns" value="baseline and differential"/>
</dbReference>
<dbReference type="GO" id="GO:0005634">
    <property type="term" value="C:nucleus"/>
    <property type="evidence" value="ECO:0000314"/>
    <property type="project" value="WormBase"/>
</dbReference>
<dbReference type="GO" id="GO:0043186">
    <property type="term" value="C:P granule"/>
    <property type="evidence" value="ECO:0000314"/>
    <property type="project" value="WormBase"/>
</dbReference>
<dbReference type="GO" id="GO:1990904">
    <property type="term" value="C:ribonucleoprotein complex"/>
    <property type="evidence" value="ECO:0000353"/>
    <property type="project" value="WormBase"/>
</dbReference>
<dbReference type="GO" id="GO:0003729">
    <property type="term" value="F:mRNA binding"/>
    <property type="evidence" value="ECO:0000318"/>
    <property type="project" value="GO_Central"/>
</dbReference>
<dbReference type="GO" id="GO:0097157">
    <property type="term" value="F:pre-mRNA intronic binding"/>
    <property type="evidence" value="ECO:0000353"/>
    <property type="project" value="WormBase"/>
</dbReference>
<dbReference type="GO" id="GO:0003727">
    <property type="term" value="F:single-stranded RNA binding"/>
    <property type="evidence" value="ECO:0000314"/>
    <property type="project" value="WormBase"/>
</dbReference>
<dbReference type="GO" id="GO:0006397">
    <property type="term" value="P:mRNA processing"/>
    <property type="evidence" value="ECO:0007669"/>
    <property type="project" value="UniProtKB-KW"/>
</dbReference>
<dbReference type="GO" id="GO:0000381">
    <property type="term" value="P:regulation of alternative mRNA splicing, via spliceosome"/>
    <property type="evidence" value="ECO:0000315"/>
    <property type="project" value="WormBase"/>
</dbReference>
<dbReference type="GO" id="GO:0048024">
    <property type="term" value="P:regulation of mRNA splicing, via spliceosome"/>
    <property type="evidence" value="ECO:0000318"/>
    <property type="project" value="GO_Central"/>
</dbReference>
<dbReference type="GO" id="GO:0008380">
    <property type="term" value="P:RNA splicing"/>
    <property type="evidence" value="ECO:0007669"/>
    <property type="project" value="UniProtKB-KW"/>
</dbReference>
<dbReference type="CDD" id="cd22466">
    <property type="entry name" value="KH-I_HOW"/>
    <property type="match status" value="1"/>
</dbReference>
<dbReference type="FunFam" id="1.20.5.4010:FF:000002">
    <property type="entry name" value="Held out wings, isoform D"/>
    <property type="match status" value="1"/>
</dbReference>
<dbReference type="FunFam" id="3.30.1370.10:FF:000028">
    <property type="entry name" value="protein quaking isoform X2"/>
    <property type="match status" value="1"/>
</dbReference>
<dbReference type="Gene3D" id="1.20.5.4010">
    <property type="match status" value="1"/>
</dbReference>
<dbReference type="Gene3D" id="3.30.1370.10">
    <property type="entry name" value="K Homology domain, type 1"/>
    <property type="match status" value="1"/>
</dbReference>
<dbReference type="InterPro" id="IPR045071">
    <property type="entry name" value="BBP-like"/>
</dbReference>
<dbReference type="InterPro" id="IPR055256">
    <property type="entry name" value="KH_1_KHDC4/BBP-like"/>
</dbReference>
<dbReference type="InterPro" id="IPR004087">
    <property type="entry name" value="KH_dom"/>
</dbReference>
<dbReference type="InterPro" id="IPR036612">
    <property type="entry name" value="KH_dom_type_1_sf"/>
</dbReference>
<dbReference type="InterPro" id="IPR032377">
    <property type="entry name" value="STAR_dimer"/>
</dbReference>
<dbReference type="PANTHER" id="PTHR11208:SF147">
    <property type="entry name" value="RNA-BINDING PROTEIN ASD-2"/>
    <property type="match status" value="1"/>
</dbReference>
<dbReference type="PANTHER" id="PTHR11208">
    <property type="entry name" value="RNA-BINDING PROTEIN RELATED"/>
    <property type="match status" value="1"/>
</dbReference>
<dbReference type="Pfam" id="PF22675">
    <property type="entry name" value="KH-I_KHDC4-BBP"/>
    <property type="match status" value="1"/>
</dbReference>
<dbReference type="Pfam" id="PF16544">
    <property type="entry name" value="STAR_dimer"/>
    <property type="match status" value="1"/>
</dbReference>
<dbReference type="SMART" id="SM00322">
    <property type="entry name" value="KH"/>
    <property type="match status" value="1"/>
</dbReference>
<dbReference type="SUPFAM" id="SSF54791">
    <property type="entry name" value="Eukaryotic type KH-domain (KH-domain type I)"/>
    <property type="match status" value="1"/>
</dbReference>
<dbReference type="PROSITE" id="PS50084">
    <property type="entry name" value="KH_TYPE_1"/>
    <property type="match status" value="1"/>
</dbReference>
<sequence length="445" mass="47789">MDCDNGVVSEISDDKELLNLETVIPPPPNDSGHEFIGPSSGPPQVTITPSGVQSGSANGVSTSQQQQYSAEYLSQLLKDKKQLAAFPNVFHHLERLADEEINKVRVVLFQCEFSKESAPLPDAEGDSTVHTEKVFVPAKEHPDYNFVGRILGPRGMTAKQLEQETGCKIMVRGRGSMRDKKKEELNRGKPNWEHLSEELHVLIQCEDTENRAKVKLMRAVEEVRKLLVPAPEGEDDLKRKQLMELAIINGTYRSGTDQSALAAAQLAAVKHQQQPFAAALQAAALQRGVLPMMANGLSRSPTMAVCGAPIVMSPSGRASSAGATATSQAALIMQQQSQLHAANAGNAALQQQAALLQQQQAAEYQQLLLSQAGLYDFSAMQQQYAAVGQNAAVAAAQAQAQAQYGALAAAAAANSAGNQQYADYAGVDLTSQQSAHGGYYVRRWA</sequence>
<protein>
    <recommendedName>
        <fullName evidence="10">RNA-binding protein asd-2</fullName>
    </recommendedName>
    <alternativeName>
        <fullName evidence="7">Alternative splicing defective protein 2</fullName>
    </alternativeName>
</protein>
<organism evidence="13">
    <name type="scientific">Caenorhabditis elegans</name>
    <dbReference type="NCBI Taxonomy" id="6239"/>
    <lineage>
        <taxon>Eukaryota</taxon>
        <taxon>Metazoa</taxon>
        <taxon>Ecdysozoa</taxon>
        <taxon>Nematoda</taxon>
        <taxon>Chromadorea</taxon>
        <taxon>Rhabditida</taxon>
        <taxon>Rhabditina</taxon>
        <taxon>Rhabditomorpha</taxon>
        <taxon>Rhabditoidea</taxon>
        <taxon>Rhabditidae</taxon>
        <taxon>Peloderinae</taxon>
        <taxon>Caenorhabditis</taxon>
    </lineage>
</organism>
<comment type="function">
    <text evidence="4 5 6">RNA-binding protein that binds to the 5'-NACUAAY-N(1,20)-UAAY-3' consensus sequence in pre-mRNA introns to promote alternative splicing (PubMed:18230701, PubMed:20573244, PubMed:23071450). Required for mutually exclusive alternative splicing where it modulates the switch between mutually exclusive exons during pre-mRNA maturation (PubMed:18230701, PubMed:23071450). Involved in muscle-specific gene expression regulating the alternative splicing of genes such as let-2 and unc-60 to ensure that their respective isoforms are expressed in muscle (PubMed:18230701, PubMed:23071450). Promotes the removal of intron 10 from let-2 pre-mRNA to allow for the exclusive expression of the muscle-specific let-2 isoform (as opposed to the non-muscle-specific isoform expressed in embryos) in body wall muscles during late larval and adult stages of development (PubMed:18230701). Binds cooperatively with RNA-binding protein sup-12 to intron 1A of the unc-60 pre-mRNA to promote alternative splicing and expression of the muscle specific isoform of unc-60 (PubMed:23071450).</text>
</comment>
<comment type="subunit">
    <text evidence="6">Interacts with sup-12; in the presence of RNA, but with weak affinity in the absence of RNA.</text>
</comment>
<comment type="interaction">
    <interactant intactId="EBI-316859">
        <id>G5EFF1</id>
    </interactant>
    <interactant intactId="EBI-321225">
        <id>Q20084</id>
        <label>exc-7</label>
    </interactant>
    <organismsDiffer>false</organismsDiffer>
    <experiments>3</experiments>
</comment>
<comment type="interaction">
    <interactant intactId="EBI-316859">
        <id>G5EFF1</id>
    </interactant>
    <interactant intactId="EBI-317668">
        <id>G5ECJ4</id>
        <label>mec-8</label>
    </interactant>
    <organismsDiffer>false</organismsDiffer>
    <experiments>4</experiments>
</comment>
<comment type="subcellular location">
    <subcellularLocation>
        <location evidence="6">Nucleus</location>
    </subcellularLocation>
</comment>
<comment type="alternative products">
    <event type="alternative splicing"/>
    <isoform>
        <id>G5EFF1-1</id>
        <name evidence="16">c</name>
        <name evidence="7 9">b</name>
        <sequence type="displayed"/>
    </isoform>
    <isoform>
        <id>G5EFF1-2</id>
        <name evidence="14">a</name>
        <sequence type="described" ref="VSP_058956 VSP_058957 VSP_058958"/>
    </isoform>
    <isoform>
        <id>G5EFF1-3</id>
        <name evidence="15">b</name>
        <name evidence="7">a</name>
        <sequence type="described" ref="VSP_058956"/>
    </isoform>
</comment>
<comment type="tissue specificity">
    <text evidence="4 6">Isoform b: Expressed in the hypodermis and pharyngeal muscles (PubMed:18230701). Isoform c: Expressed in body wall muscles and phayngeal muscles (PubMed:18230701, PubMed:23071450).</text>
</comment>
<comment type="developmental stage">
    <text evidence="4">Expressed during embryonic development.</text>
</comment>
<comment type="domain">
    <text evidence="11">The KH domain and the Qua2 region are involved in RNA binding.</text>
</comment>
<comment type="disruption phenotype">
    <text evidence="4 6">Defective alternative splicing of the unc-60 gene which results in decreased expression of the muscle-specific isoform of unc-60 (PubMed:23071450). Double knockout with isoform c of unc-60 rescues the motility and actin filament disorganization defects in the single unc-60 isoform c mutant (PubMed:23071450). RNAi-mediated knockdown results animals that are viable throughout embryonic and larval development, and furthermore, results in defective alternative splicing of the let-2 gene, whereby transcripts containing exon 10 are not formed in larvae and so the muscle-specific isoform of let-2 is not expressed in body wall muscles (PubMed:18230701). RNAi-mediated knockdown results in abnormal ectopic expression of the non-muscle-specific isoform b of unc-60 in body wall muscles (PubMed:23071450).</text>
</comment>
<proteinExistence type="evidence at protein level"/>
<gene>
    <name evidence="7 16" type="primary">asd-2</name>
    <name evidence="16" type="synonym">let-529</name>
    <name evidence="8 16" type="synonym">star-2</name>
    <name evidence="16" type="synonym">tag-44</name>
    <name evidence="16" type="ORF">T21G5.5</name>
</gene>
<feature type="chain" id="PRO_0000440162" description="RNA-binding protein asd-2" evidence="10">
    <location>
        <begin position="1"/>
        <end position="445"/>
    </location>
</feature>
<feature type="domain" description="KH" evidence="2">
    <location>
        <begin position="145"/>
        <end position="171"/>
    </location>
</feature>
<feature type="region of interest" description="Disordered" evidence="3">
    <location>
        <begin position="22"/>
        <end position="63"/>
    </location>
</feature>
<feature type="region of interest" description="Qua1 domain" evidence="1">
    <location>
        <begin position="71"/>
        <end position="128"/>
    </location>
</feature>
<feature type="region of interest" description="Qua2 domain; involved in RNA binding" evidence="1">
    <location>
        <begin position="230"/>
        <end position="253"/>
    </location>
</feature>
<feature type="compositionally biased region" description="Polar residues" evidence="3">
    <location>
        <begin position="42"/>
        <end position="63"/>
    </location>
</feature>
<feature type="site" description="Involved in RNA binding" evidence="1">
    <location>
        <position position="145"/>
    </location>
</feature>
<feature type="site" description="Important for the interaction between KH and Qua2 domains" evidence="1">
    <location>
        <position position="153"/>
    </location>
</feature>
<feature type="site" description="Involved in RNA binding" evidence="1">
    <location>
        <position position="168"/>
    </location>
</feature>
<feature type="site" description="Involved in RNA binding" evidence="1">
    <location>
        <position position="172"/>
    </location>
</feature>
<feature type="site" description="Important for RNA binding" evidence="1">
    <location>
        <position position="178"/>
    </location>
</feature>
<feature type="site" description="Involved in RNA binding" evidence="1">
    <location>
        <position position="238"/>
    </location>
</feature>
<feature type="site" description="Involved in RNA binding" evidence="1">
    <location>
        <position position="241"/>
    </location>
</feature>
<feature type="site" description="Important for the interaction between KH and Qua2 domains" evidence="1">
    <location>
        <position position="245"/>
    </location>
</feature>
<feature type="splice variant" id="VSP_058956" description="In isoform a and isoform b." evidence="10">
    <original>MDCDNGVVSEISDDKELLNLETVIPPPPNDSGHEFIGPSSGPPQVTITPSGVQS</original>
    <variation>MTHASTDLLTPN</variation>
    <location>
        <begin position="1"/>
        <end position="54"/>
    </location>
</feature>
<feature type="splice variant" id="VSP_058957" description="In isoform a." evidence="10">
    <original>S</original>
    <variation>R</variation>
    <location>
        <position position="370"/>
    </location>
</feature>
<feature type="splice variant" id="VSP_058958" description="In isoform a." evidence="10">
    <location>
        <begin position="371"/>
        <end position="445"/>
    </location>
</feature>
<feature type="mutagenesis site" description="In yb1423; defective alternative splicing of the let-2 gene whereby intron 10 within the let-2 pre-mRNA is not removed." evidence="4">
    <original>E</original>
    <variation>K</variation>
    <location>
        <position position="244"/>
    </location>
</feature>
<accession>G5EFF1</accession>
<accession>G5EFG9</accession>
<accession>O02065</accession>